<feature type="chain" id="PRO_1000212547" description="Pole-localizer protein TmaR">
    <location>
        <begin position="1"/>
        <end position="105"/>
    </location>
</feature>
<feature type="coiled-coil region" evidence="1">
    <location>
        <begin position="22"/>
        <end position="42"/>
    </location>
</feature>
<feature type="coiled-coil region" evidence="1">
    <location>
        <begin position="77"/>
        <end position="104"/>
    </location>
</feature>
<proteinExistence type="inferred from homology"/>
<keyword id="KW-0175">Coiled coil</keyword>
<keyword id="KW-0963">Cytoplasm</keyword>
<comment type="function">
    <text evidence="1">Pole-localizer protein involved in the regulation of several cellular processes.</text>
</comment>
<comment type="subcellular location">
    <subcellularLocation>
        <location evidence="1">Cytoplasm</location>
    </subcellularLocation>
</comment>
<comment type="similarity">
    <text evidence="1">Belongs to the pole-localizer TmaR family.</text>
</comment>
<protein>
    <recommendedName>
        <fullName evidence="1">Pole-localizer protein TmaR</fullName>
    </recommendedName>
</protein>
<dbReference type="EMBL" id="CP001657">
    <property type="protein sequence ID" value="ACT12808.1"/>
    <property type="molecule type" value="Genomic_DNA"/>
</dbReference>
<dbReference type="SMR" id="C6DF99"/>
<dbReference type="STRING" id="561230.PC1_1767"/>
<dbReference type="KEGG" id="pct:PC1_1767"/>
<dbReference type="eggNOG" id="COG2926">
    <property type="taxonomic scope" value="Bacteria"/>
</dbReference>
<dbReference type="HOGENOM" id="CLU_153146_0_0_6"/>
<dbReference type="OrthoDB" id="90485at2"/>
<dbReference type="Proteomes" id="UP000002736">
    <property type="component" value="Chromosome"/>
</dbReference>
<dbReference type="GO" id="GO:0005829">
    <property type="term" value="C:cytosol"/>
    <property type="evidence" value="ECO:0007669"/>
    <property type="project" value="TreeGrafter"/>
</dbReference>
<dbReference type="HAMAP" id="MF_00683">
    <property type="entry name" value="Pole_loc_TmaR"/>
    <property type="match status" value="1"/>
</dbReference>
<dbReference type="InterPro" id="IPR007458">
    <property type="entry name" value="DUF496"/>
</dbReference>
<dbReference type="InterPro" id="IPR053375">
    <property type="entry name" value="UPF0265"/>
</dbReference>
<dbReference type="NCBIfam" id="NF003844">
    <property type="entry name" value="PRK05423.1"/>
    <property type="match status" value="1"/>
</dbReference>
<dbReference type="NCBIfam" id="NF040881">
    <property type="entry name" value="PTS_reg_TmaR"/>
    <property type="match status" value="1"/>
</dbReference>
<dbReference type="PANTHER" id="PTHR39591">
    <property type="entry name" value="UPF0265 PROTEIN YEEX"/>
    <property type="match status" value="1"/>
</dbReference>
<dbReference type="PANTHER" id="PTHR39591:SF1">
    <property type="entry name" value="UPF0265 PROTEIN YEEX"/>
    <property type="match status" value="1"/>
</dbReference>
<dbReference type="Pfam" id="PF04363">
    <property type="entry name" value="DUF496"/>
    <property type="match status" value="1"/>
</dbReference>
<dbReference type="PIRSF" id="PIRSF028773">
    <property type="entry name" value="UCP028773"/>
    <property type="match status" value="1"/>
</dbReference>
<reference key="1">
    <citation type="submission" date="2009-07" db="EMBL/GenBank/DDBJ databases">
        <title>Complete sequence of Pectobacterium carotovorum subsp. carotovorum PC1.</title>
        <authorList>
            <consortium name="US DOE Joint Genome Institute"/>
            <person name="Lucas S."/>
            <person name="Copeland A."/>
            <person name="Lapidus A."/>
            <person name="Glavina del Rio T."/>
            <person name="Tice H."/>
            <person name="Bruce D."/>
            <person name="Goodwin L."/>
            <person name="Pitluck S."/>
            <person name="Munk A.C."/>
            <person name="Brettin T."/>
            <person name="Detter J.C."/>
            <person name="Han C."/>
            <person name="Tapia R."/>
            <person name="Larimer F."/>
            <person name="Land M."/>
            <person name="Hauser L."/>
            <person name="Kyrpides N."/>
            <person name="Mikhailova N."/>
            <person name="Balakrishnan V."/>
            <person name="Glasner J."/>
            <person name="Perna N.T."/>
        </authorList>
    </citation>
    <scope>NUCLEOTIDE SEQUENCE [LARGE SCALE GENOMIC DNA]</scope>
    <source>
        <strain>PC1</strain>
    </source>
</reference>
<name>TMAR_PECCP</name>
<organism>
    <name type="scientific">Pectobacterium carotovorum subsp. carotovorum (strain PC1)</name>
    <dbReference type="NCBI Taxonomy" id="561230"/>
    <lineage>
        <taxon>Bacteria</taxon>
        <taxon>Pseudomonadati</taxon>
        <taxon>Pseudomonadota</taxon>
        <taxon>Gammaproteobacteria</taxon>
        <taxon>Enterobacterales</taxon>
        <taxon>Pectobacteriaceae</taxon>
        <taxon>Pectobacterium</taxon>
    </lineage>
</organism>
<evidence type="ECO:0000255" key="1">
    <source>
        <dbReference type="HAMAP-Rule" id="MF_00683"/>
    </source>
</evidence>
<gene>
    <name evidence="1" type="primary">tmaR</name>
    <name type="ordered locus">PC1_1767</name>
</gene>
<accession>C6DF99</accession>
<sequence>MDKDTKPCFQDVLEFVRMFRRKNKLQREIVDNEKKIRDNQKRVLLLDNLSEYLKPGMSIEDVQNIIANMRGDYEDRVDDYIIKNADLSKERRELSKKLKAMGEVK</sequence>